<feature type="chain" id="PRO_0000225164" description="Crossover junction endodeoxyribonuclease RuvC">
    <location>
        <begin position="1"/>
        <end position="174"/>
    </location>
</feature>
<feature type="active site" evidence="1">
    <location>
        <position position="8"/>
    </location>
</feature>
<feature type="active site" evidence="1">
    <location>
        <position position="67"/>
    </location>
</feature>
<feature type="active site" evidence="1">
    <location>
        <position position="139"/>
    </location>
</feature>
<feature type="binding site" evidence="1">
    <location>
        <position position="8"/>
    </location>
    <ligand>
        <name>Mg(2+)</name>
        <dbReference type="ChEBI" id="CHEBI:18420"/>
        <label>1</label>
    </ligand>
</feature>
<feature type="binding site" evidence="1">
    <location>
        <position position="67"/>
    </location>
    <ligand>
        <name>Mg(2+)</name>
        <dbReference type="ChEBI" id="CHEBI:18420"/>
        <label>2</label>
    </ligand>
</feature>
<feature type="binding site" evidence="1">
    <location>
        <position position="139"/>
    </location>
    <ligand>
        <name>Mg(2+)</name>
        <dbReference type="ChEBI" id="CHEBI:18420"/>
        <label>1</label>
    </ligand>
</feature>
<proteinExistence type="inferred from homology"/>
<evidence type="ECO:0000255" key="1">
    <source>
        <dbReference type="HAMAP-Rule" id="MF_00034"/>
    </source>
</evidence>
<comment type="function">
    <text evidence="1">The RuvA-RuvB-RuvC complex processes Holliday junction (HJ) DNA during genetic recombination and DNA repair. Endonuclease that resolves HJ intermediates. Cleaves cruciform DNA by making single-stranded nicks across the HJ at symmetrical positions within the homologous arms, yielding a 5'-phosphate and a 3'-hydroxyl group; requires a central core of homology in the junction. The consensus cleavage sequence is 5'-(A/T)TT(C/G)-3'. Cleavage occurs on the 3'-side of the TT dinucleotide at the point of strand exchange. HJ branch migration catalyzed by RuvA-RuvB allows RuvC to scan DNA until it finds its consensus sequence, where it cleaves and resolves the cruciform DNA.</text>
</comment>
<comment type="catalytic activity">
    <reaction evidence="1">
        <text>Endonucleolytic cleavage at a junction such as a reciprocal single-stranded crossover between two homologous DNA duplexes (Holliday junction).</text>
        <dbReference type="EC" id="3.1.21.10"/>
    </reaction>
</comment>
<comment type="cofactor">
    <cofactor evidence="1">
        <name>Mg(2+)</name>
        <dbReference type="ChEBI" id="CHEBI:18420"/>
    </cofactor>
    <text evidence="1">Binds 2 Mg(2+) ion per subunit.</text>
</comment>
<comment type="subunit">
    <text evidence="1">Homodimer which binds Holliday junction (HJ) DNA. The HJ becomes 2-fold symmetrical on binding to RuvC with unstacked arms; it has a different conformation from HJ DNA in complex with RuvA. In the full resolvosome a probable DNA-RuvA(4)-RuvB(12)-RuvC(2) complex forms which resolves the HJ.</text>
</comment>
<comment type="subcellular location">
    <subcellularLocation>
        <location evidence="1">Cytoplasm</location>
    </subcellularLocation>
</comment>
<comment type="similarity">
    <text evidence="1">Belongs to the RuvC family.</text>
</comment>
<sequence length="174" mass="18329">MTLILGIDPGSRITGYGVVRDTGRGCVYVASGCIRTGAGELPDRLQIVYRGVREVIQTYGPVTMGIEKVFMARNADSALKLGQARGAAIVAGAEEGLEIAEYTATQVKQAVAGTGGANKEQVQMMVMHLLKLTTKPQIDASDALAIAICHAHTRSSLLPHGLGTARSRGGRLRL</sequence>
<gene>
    <name evidence="1" type="primary">ruvC</name>
    <name type="ordered locus">PFL_4765</name>
</gene>
<accession>Q4K7D7</accession>
<name>RUVC_PSEF5</name>
<protein>
    <recommendedName>
        <fullName evidence="1">Crossover junction endodeoxyribonuclease RuvC</fullName>
        <ecNumber evidence="1">3.1.21.10</ecNumber>
    </recommendedName>
    <alternativeName>
        <fullName evidence="1">Holliday junction nuclease RuvC</fullName>
    </alternativeName>
    <alternativeName>
        <fullName evidence="1">Holliday junction resolvase RuvC</fullName>
    </alternativeName>
</protein>
<dbReference type="EC" id="3.1.21.10" evidence="1"/>
<dbReference type="EMBL" id="CP000076">
    <property type="protein sequence ID" value="AAY93995.1"/>
    <property type="molecule type" value="Genomic_DNA"/>
</dbReference>
<dbReference type="RefSeq" id="WP_011063020.1">
    <property type="nucleotide sequence ID" value="NC_004129.6"/>
</dbReference>
<dbReference type="SMR" id="Q4K7D7"/>
<dbReference type="STRING" id="220664.PFL_4765"/>
<dbReference type="KEGG" id="pfl:PFL_4765"/>
<dbReference type="PATRIC" id="fig|220664.5.peg.4875"/>
<dbReference type="eggNOG" id="COG0817">
    <property type="taxonomic scope" value="Bacteria"/>
</dbReference>
<dbReference type="HOGENOM" id="CLU_091257_2_1_6"/>
<dbReference type="Proteomes" id="UP000008540">
    <property type="component" value="Chromosome"/>
</dbReference>
<dbReference type="GO" id="GO:0005737">
    <property type="term" value="C:cytoplasm"/>
    <property type="evidence" value="ECO:0007669"/>
    <property type="project" value="UniProtKB-SubCell"/>
</dbReference>
<dbReference type="GO" id="GO:0048476">
    <property type="term" value="C:Holliday junction resolvase complex"/>
    <property type="evidence" value="ECO:0007669"/>
    <property type="project" value="UniProtKB-UniRule"/>
</dbReference>
<dbReference type="GO" id="GO:0008821">
    <property type="term" value="F:crossover junction DNA endonuclease activity"/>
    <property type="evidence" value="ECO:0007669"/>
    <property type="project" value="UniProtKB-UniRule"/>
</dbReference>
<dbReference type="GO" id="GO:0003677">
    <property type="term" value="F:DNA binding"/>
    <property type="evidence" value="ECO:0007669"/>
    <property type="project" value="UniProtKB-KW"/>
</dbReference>
<dbReference type="GO" id="GO:0000287">
    <property type="term" value="F:magnesium ion binding"/>
    <property type="evidence" value="ECO:0007669"/>
    <property type="project" value="UniProtKB-UniRule"/>
</dbReference>
<dbReference type="GO" id="GO:0006310">
    <property type="term" value="P:DNA recombination"/>
    <property type="evidence" value="ECO:0007669"/>
    <property type="project" value="UniProtKB-UniRule"/>
</dbReference>
<dbReference type="GO" id="GO:0006281">
    <property type="term" value="P:DNA repair"/>
    <property type="evidence" value="ECO:0007669"/>
    <property type="project" value="UniProtKB-UniRule"/>
</dbReference>
<dbReference type="CDD" id="cd16962">
    <property type="entry name" value="RuvC"/>
    <property type="match status" value="1"/>
</dbReference>
<dbReference type="FunFam" id="3.30.420.10:FF:000002">
    <property type="entry name" value="Crossover junction endodeoxyribonuclease RuvC"/>
    <property type="match status" value="1"/>
</dbReference>
<dbReference type="Gene3D" id="3.30.420.10">
    <property type="entry name" value="Ribonuclease H-like superfamily/Ribonuclease H"/>
    <property type="match status" value="1"/>
</dbReference>
<dbReference type="HAMAP" id="MF_00034">
    <property type="entry name" value="RuvC"/>
    <property type="match status" value="1"/>
</dbReference>
<dbReference type="InterPro" id="IPR012337">
    <property type="entry name" value="RNaseH-like_sf"/>
</dbReference>
<dbReference type="InterPro" id="IPR036397">
    <property type="entry name" value="RNaseH_sf"/>
</dbReference>
<dbReference type="InterPro" id="IPR020563">
    <property type="entry name" value="X-over_junc_endoDNase_Mg_BS"/>
</dbReference>
<dbReference type="InterPro" id="IPR002176">
    <property type="entry name" value="X-over_junc_endoDNase_RuvC"/>
</dbReference>
<dbReference type="NCBIfam" id="TIGR00228">
    <property type="entry name" value="ruvC"/>
    <property type="match status" value="1"/>
</dbReference>
<dbReference type="PANTHER" id="PTHR30194">
    <property type="entry name" value="CROSSOVER JUNCTION ENDODEOXYRIBONUCLEASE RUVC"/>
    <property type="match status" value="1"/>
</dbReference>
<dbReference type="PANTHER" id="PTHR30194:SF3">
    <property type="entry name" value="CROSSOVER JUNCTION ENDODEOXYRIBONUCLEASE RUVC"/>
    <property type="match status" value="1"/>
</dbReference>
<dbReference type="Pfam" id="PF02075">
    <property type="entry name" value="RuvC"/>
    <property type="match status" value="1"/>
</dbReference>
<dbReference type="PRINTS" id="PR00696">
    <property type="entry name" value="RSOLVASERUVC"/>
</dbReference>
<dbReference type="SUPFAM" id="SSF53098">
    <property type="entry name" value="Ribonuclease H-like"/>
    <property type="match status" value="1"/>
</dbReference>
<dbReference type="PROSITE" id="PS01321">
    <property type="entry name" value="RUVC"/>
    <property type="match status" value="1"/>
</dbReference>
<organism>
    <name type="scientific">Pseudomonas fluorescens (strain ATCC BAA-477 / NRRL B-23932 / Pf-5)</name>
    <dbReference type="NCBI Taxonomy" id="220664"/>
    <lineage>
        <taxon>Bacteria</taxon>
        <taxon>Pseudomonadati</taxon>
        <taxon>Pseudomonadota</taxon>
        <taxon>Gammaproteobacteria</taxon>
        <taxon>Pseudomonadales</taxon>
        <taxon>Pseudomonadaceae</taxon>
        <taxon>Pseudomonas</taxon>
    </lineage>
</organism>
<reference key="1">
    <citation type="journal article" date="2005" name="Nat. Biotechnol.">
        <title>Complete genome sequence of the plant commensal Pseudomonas fluorescens Pf-5.</title>
        <authorList>
            <person name="Paulsen I.T."/>
            <person name="Press C.M."/>
            <person name="Ravel J."/>
            <person name="Kobayashi D.Y."/>
            <person name="Myers G.S.A."/>
            <person name="Mavrodi D.V."/>
            <person name="DeBoy R.T."/>
            <person name="Seshadri R."/>
            <person name="Ren Q."/>
            <person name="Madupu R."/>
            <person name="Dodson R.J."/>
            <person name="Durkin A.S."/>
            <person name="Brinkac L.M."/>
            <person name="Daugherty S.C."/>
            <person name="Sullivan S.A."/>
            <person name="Rosovitz M.J."/>
            <person name="Gwinn M.L."/>
            <person name="Zhou L."/>
            <person name="Schneider D.J."/>
            <person name="Cartinhour S.W."/>
            <person name="Nelson W.C."/>
            <person name="Weidman J."/>
            <person name="Watkins K."/>
            <person name="Tran K."/>
            <person name="Khouri H."/>
            <person name="Pierson E.A."/>
            <person name="Pierson L.S. III"/>
            <person name="Thomashow L.S."/>
            <person name="Loper J.E."/>
        </authorList>
    </citation>
    <scope>NUCLEOTIDE SEQUENCE [LARGE SCALE GENOMIC DNA]</scope>
    <source>
        <strain>ATCC BAA-477 / NRRL B-23932 / Pf-5</strain>
    </source>
</reference>
<keyword id="KW-0963">Cytoplasm</keyword>
<keyword id="KW-0227">DNA damage</keyword>
<keyword id="KW-0233">DNA recombination</keyword>
<keyword id="KW-0234">DNA repair</keyword>
<keyword id="KW-0238">DNA-binding</keyword>
<keyword id="KW-0255">Endonuclease</keyword>
<keyword id="KW-0378">Hydrolase</keyword>
<keyword id="KW-0460">Magnesium</keyword>
<keyword id="KW-0479">Metal-binding</keyword>
<keyword id="KW-0540">Nuclease</keyword>